<keyword id="KW-0464">Manganese</keyword>
<keyword id="KW-0479">Metal-binding</keyword>
<keyword id="KW-0560">Oxidoreductase</keyword>
<keyword id="KW-1185">Reference proteome</keyword>
<evidence type="ECO:0000250" key="1"/>
<evidence type="ECO:0000305" key="2"/>
<feature type="chain" id="PRO_0000160040" description="Superoxide dismutase [Mn]">
    <location>
        <begin position="1"/>
        <end position="206"/>
    </location>
</feature>
<feature type="binding site" evidence="1">
    <location>
        <position position="27"/>
    </location>
    <ligand>
        <name>Mn(2+)</name>
        <dbReference type="ChEBI" id="CHEBI:29035"/>
    </ligand>
</feature>
<feature type="binding site" evidence="1">
    <location>
        <position position="82"/>
    </location>
    <ligand>
        <name>Mn(2+)</name>
        <dbReference type="ChEBI" id="CHEBI:29035"/>
    </ligand>
</feature>
<feature type="binding site" evidence="1">
    <location>
        <position position="168"/>
    </location>
    <ligand>
        <name>Mn(2+)</name>
        <dbReference type="ChEBI" id="CHEBI:29035"/>
    </ligand>
</feature>
<feature type="binding site" evidence="1">
    <location>
        <position position="172"/>
    </location>
    <ligand>
        <name>Mn(2+)</name>
        <dbReference type="ChEBI" id="CHEBI:29035"/>
    </ligand>
</feature>
<name>SODM_LACLA</name>
<sequence>MAFTLPELPYAPNALEPFFDEATMRLHHGKHHQTYVNNLNAAIEKHNELDDLSLEELLTDLSAIPEDIRTAVRNNGGGHLNHSQFWLWLRPNTDGSENHADGEIGDAIAKEFGSFETFKTEFKAAATGRFGSGWAWLVVDEAGKLKVVSTANQDNPISEGLTPVLGLDVWEHAYYLKYHNVRPDYIEAFFNLVNWDKVNELYAKAK</sequence>
<organism>
    <name type="scientific">Lactococcus lactis subsp. lactis (strain IL1403)</name>
    <name type="common">Streptococcus lactis</name>
    <dbReference type="NCBI Taxonomy" id="272623"/>
    <lineage>
        <taxon>Bacteria</taxon>
        <taxon>Bacillati</taxon>
        <taxon>Bacillota</taxon>
        <taxon>Bacilli</taxon>
        <taxon>Lactobacillales</taxon>
        <taxon>Streptococcaceae</taxon>
        <taxon>Lactococcus</taxon>
    </lineage>
</organism>
<accession>P0A4J1</accession>
<accession>P50911</accession>
<proteinExistence type="inferred from homology"/>
<protein>
    <recommendedName>
        <fullName>Superoxide dismutase [Mn]</fullName>
        <ecNumber>1.15.1.1</ecNumber>
    </recommendedName>
</protein>
<gene>
    <name type="primary">sodA</name>
    <name type="ordered locus">LL0408</name>
    <name type="ORF">L12227</name>
</gene>
<comment type="function">
    <text>Destroys superoxide anion radicals which are normally produced within the cells and which are toxic to biological systems.</text>
</comment>
<comment type="catalytic activity">
    <reaction>
        <text>2 superoxide + 2 H(+) = H2O2 + O2</text>
        <dbReference type="Rhea" id="RHEA:20696"/>
        <dbReference type="ChEBI" id="CHEBI:15378"/>
        <dbReference type="ChEBI" id="CHEBI:15379"/>
        <dbReference type="ChEBI" id="CHEBI:16240"/>
        <dbReference type="ChEBI" id="CHEBI:18421"/>
        <dbReference type="EC" id="1.15.1.1"/>
    </reaction>
</comment>
<comment type="cofactor">
    <cofactor evidence="1">
        <name>Mn(2+)</name>
        <dbReference type="ChEBI" id="CHEBI:29035"/>
    </cofactor>
    <text evidence="1">Binds 1 Mn(2+) ion per subunit.</text>
</comment>
<comment type="similarity">
    <text evidence="2">Belongs to the iron/manganese superoxide dismutase family.</text>
</comment>
<dbReference type="EC" id="1.15.1.1"/>
<dbReference type="EMBL" id="AE005176">
    <property type="protein sequence ID" value="AAK04506.1"/>
    <property type="molecule type" value="Genomic_DNA"/>
</dbReference>
<dbReference type="PIR" id="H86675">
    <property type="entry name" value="H86675"/>
</dbReference>
<dbReference type="RefSeq" id="NP_266564.1">
    <property type="nucleotide sequence ID" value="NC_002662.1"/>
</dbReference>
<dbReference type="RefSeq" id="WP_003131560.1">
    <property type="nucleotide sequence ID" value="NC_002662.1"/>
</dbReference>
<dbReference type="SMR" id="P0A4J1"/>
<dbReference type="PaxDb" id="272623-L12227"/>
<dbReference type="EnsemblBacteria" id="AAK04506">
    <property type="protein sequence ID" value="AAK04506"/>
    <property type="gene ID" value="L12227"/>
</dbReference>
<dbReference type="KEGG" id="lla:L12227"/>
<dbReference type="PATRIC" id="fig|272623.7.peg.442"/>
<dbReference type="eggNOG" id="COG0605">
    <property type="taxonomic scope" value="Bacteria"/>
</dbReference>
<dbReference type="HOGENOM" id="CLU_031625_0_1_9"/>
<dbReference type="OrthoDB" id="9803125at2"/>
<dbReference type="Proteomes" id="UP000002196">
    <property type="component" value="Chromosome"/>
</dbReference>
<dbReference type="GO" id="GO:0005737">
    <property type="term" value="C:cytoplasm"/>
    <property type="evidence" value="ECO:0007669"/>
    <property type="project" value="TreeGrafter"/>
</dbReference>
<dbReference type="GO" id="GO:0046872">
    <property type="term" value="F:metal ion binding"/>
    <property type="evidence" value="ECO:0007669"/>
    <property type="project" value="UniProtKB-KW"/>
</dbReference>
<dbReference type="GO" id="GO:0004784">
    <property type="term" value="F:superoxide dismutase activity"/>
    <property type="evidence" value="ECO:0007669"/>
    <property type="project" value="UniProtKB-EC"/>
</dbReference>
<dbReference type="FunFam" id="1.10.287.990:FF:000001">
    <property type="entry name" value="Superoxide dismutase"/>
    <property type="match status" value="1"/>
</dbReference>
<dbReference type="FunFam" id="3.55.40.20:FF:000001">
    <property type="entry name" value="Superoxide dismutase"/>
    <property type="match status" value="1"/>
</dbReference>
<dbReference type="Gene3D" id="1.10.287.990">
    <property type="entry name" value="Fe,Mn superoxide dismutase (SOD) domain"/>
    <property type="match status" value="1"/>
</dbReference>
<dbReference type="Gene3D" id="3.55.40.20">
    <property type="entry name" value="Iron/manganese superoxide dismutase, C-terminal domain"/>
    <property type="match status" value="1"/>
</dbReference>
<dbReference type="InterPro" id="IPR001189">
    <property type="entry name" value="Mn/Fe_SOD"/>
</dbReference>
<dbReference type="InterPro" id="IPR019833">
    <property type="entry name" value="Mn/Fe_SOD_BS"/>
</dbReference>
<dbReference type="InterPro" id="IPR019832">
    <property type="entry name" value="Mn/Fe_SOD_C"/>
</dbReference>
<dbReference type="InterPro" id="IPR019831">
    <property type="entry name" value="Mn/Fe_SOD_N"/>
</dbReference>
<dbReference type="InterPro" id="IPR036324">
    <property type="entry name" value="Mn/Fe_SOD_N_sf"/>
</dbReference>
<dbReference type="InterPro" id="IPR036314">
    <property type="entry name" value="SOD_C_sf"/>
</dbReference>
<dbReference type="PANTHER" id="PTHR43595">
    <property type="entry name" value="37S RIBOSOMAL PROTEIN S26, MITOCHONDRIAL"/>
    <property type="match status" value="1"/>
</dbReference>
<dbReference type="PANTHER" id="PTHR43595:SF2">
    <property type="entry name" value="SMALL RIBOSOMAL SUBUNIT PROTEIN MS42"/>
    <property type="match status" value="1"/>
</dbReference>
<dbReference type="Pfam" id="PF02777">
    <property type="entry name" value="Sod_Fe_C"/>
    <property type="match status" value="1"/>
</dbReference>
<dbReference type="Pfam" id="PF00081">
    <property type="entry name" value="Sod_Fe_N"/>
    <property type="match status" value="1"/>
</dbReference>
<dbReference type="PIRSF" id="PIRSF000349">
    <property type="entry name" value="SODismutase"/>
    <property type="match status" value="1"/>
</dbReference>
<dbReference type="PRINTS" id="PR01703">
    <property type="entry name" value="MNSODISMTASE"/>
</dbReference>
<dbReference type="SUPFAM" id="SSF54719">
    <property type="entry name" value="Fe,Mn superoxide dismutase (SOD), C-terminal domain"/>
    <property type="match status" value="1"/>
</dbReference>
<dbReference type="SUPFAM" id="SSF46609">
    <property type="entry name" value="Fe,Mn superoxide dismutase (SOD), N-terminal domain"/>
    <property type="match status" value="1"/>
</dbReference>
<dbReference type="PROSITE" id="PS00088">
    <property type="entry name" value="SOD_MN"/>
    <property type="match status" value="1"/>
</dbReference>
<reference key="1">
    <citation type="journal article" date="2001" name="Genome Res.">
        <title>The complete genome sequence of the lactic acid bacterium Lactococcus lactis ssp. lactis IL1403.</title>
        <authorList>
            <person name="Bolotin A."/>
            <person name="Wincker P."/>
            <person name="Mauger S."/>
            <person name="Jaillon O."/>
            <person name="Malarme K."/>
            <person name="Weissenbach J."/>
            <person name="Ehrlich S.D."/>
            <person name="Sorokin A."/>
        </authorList>
    </citation>
    <scope>NUCLEOTIDE SEQUENCE [LARGE SCALE GENOMIC DNA]</scope>
    <source>
        <strain>IL1403</strain>
    </source>
</reference>